<protein>
    <recommendedName>
        <fullName>Ras-related protein Rab-40A-like</fullName>
        <ecNumber evidence="3">3.6.5.2</ecNumber>
    </recommendedName>
    <alternativeName>
        <fullName evidence="12">Ras-like GTPase</fullName>
    </alternativeName>
</protein>
<dbReference type="EC" id="3.6.5.2" evidence="3"/>
<dbReference type="EMBL" id="Z95624">
    <property type="status" value="NOT_ANNOTATED_CDS"/>
    <property type="molecule type" value="Genomic_DNA"/>
</dbReference>
<dbReference type="EMBL" id="BC101169">
    <property type="protein sequence ID" value="AAI01170.1"/>
    <property type="molecule type" value="mRNA"/>
</dbReference>
<dbReference type="EMBL" id="BC101170">
    <property type="protein sequence ID" value="AAI01171.1"/>
    <property type="molecule type" value="mRNA"/>
</dbReference>
<dbReference type="EMBL" id="BC101171">
    <property type="protein sequence ID" value="AAI01172.1"/>
    <property type="molecule type" value="mRNA"/>
</dbReference>
<dbReference type="EMBL" id="BC101172">
    <property type="protein sequence ID" value="AAI01173.1"/>
    <property type="molecule type" value="mRNA"/>
</dbReference>
<dbReference type="CCDS" id="CCDS35353.1"/>
<dbReference type="RefSeq" id="NP_001027004.1">
    <property type="nucleotide sequence ID" value="NM_001031834.1"/>
</dbReference>
<dbReference type="SMR" id="P0C0E4"/>
<dbReference type="BioGRID" id="129420">
    <property type="interactions" value="27"/>
</dbReference>
<dbReference type="FunCoup" id="P0C0E4">
    <property type="interactions" value="141"/>
</dbReference>
<dbReference type="IntAct" id="P0C0E4">
    <property type="interactions" value="13"/>
</dbReference>
<dbReference type="STRING" id="9606.ENSP00000218249"/>
<dbReference type="iPTMnet" id="P0C0E4"/>
<dbReference type="PhosphoSitePlus" id="P0C0E4"/>
<dbReference type="BioMuta" id="RAB40AL"/>
<dbReference type="DMDM" id="83287760"/>
<dbReference type="MassIVE" id="P0C0E4"/>
<dbReference type="PaxDb" id="9606-ENSP00000218249"/>
<dbReference type="PeptideAtlas" id="P0C0E4"/>
<dbReference type="Antibodypedia" id="68152">
    <property type="antibodies" value="65 antibodies from 12 providers"/>
</dbReference>
<dbReference type="DNASU" id="282808"/>
<dbReference type="Ensembl" id="ENST00000218249.7">
    <property type="protein sequence ID" value="ENSP00000218249.5"/>
    <property type="gene ID" value="ENSG00000102128.8"/>
</dbReference>
<dbReference type="GeneID" id="282808"/>
<dbReference type="KEGG" id="hsa:282808"/>
<dbReference type="MANE-Select" id="ENST00000218249.7">
    <property type="protein sequence ID" value="ENSP00000218249.5"/>
    <property type="RefSeq nucleotide sequence ID" value="NM_001031834.1"/>
    <property type="RefSeq protein sequence ID" value="NP_001027004.1"/>
</dbReference>
<dbReference type="UCSC" id="uc004ejs.4">
    <property type="organism name" value="human"/>
</dbReference>
<dbReference type="AGR" id="HGNC:25410"/>
<dbReference type="CTD" id="282808"/>
<dbReference type="DisGeNET" id="282808"/>
<dbReference type="GeneCards" id="RAB40AL"/>
<dbReference type="HGNC" id="HGNC:25410">
    <property type="gene designation" value="RAB40AL"/>
</dbReference>
<dbReference type="HPA" id="ENSG00000102128">
    <property type="expression patterns" value="Not detected"/>
</dbReference>
<dbReference type="MalaCards" id="RAB40AL"/>
<dbReference type="MIM" id="300405">
    <property type="type" value="gene"/>
</dbReference>
<dbReference type="neXtProt" id="NX_P0C0E4"/>
<dbReference type="OpenTargets" id="ENSG00000102128"/>
<dbReference type="PharmGKB" id="PA142671103"/>
<dbReference type="VEuPathDB" id="HostDB:ENSG00000102128"/>
<dbReference type="eggNOG" id="KOG0078">
    <property type="taxonomic scope" value="Eukaryota"/>
</dbReference>
<dbReference type="GeneTree" id="ENSGT00940000166416"/>
<dbReference type="HOGENOM" id="CLU_041217_11_0_1"/>
<dbReference type="InParanoid" id="P0C0E4"/>
<dbReference type="OMA" id="CKMKIVC"/>
<dbReference type="OrthoDB" id="6339763at2759"/>
<dbReference type="PAN-GO" id="P0C0E4">
    <property type="GO annotations" value="5 GO annotations based on evolutionary models"/>
</dbReference>
<dbReference type="PhylomeDB" id="P0C0E4"/>
<dbReference type="TreeFam" id="TF323230"/>
<dbReference type="PathwayCommons" id="P0C0E4"/>
<dbReference type="SignaLink" id="P0C0E4"/>
<dbReference type="UniPathway" id="UPA00143"/>
<dbReference type="BioGRID-ORCS" id="282808">
    <property type="hits" value="6 hits in 666 CRISPR screens"/>
</dbReference>
<dbReference type="GenomeRNAi" id="282808"/>
<dbReference type="Pharos" id="P0C0E4">
    <property type="development level" value="Tbio"/>
</dbReference>
<dbReference type="PRO" id="PR:P0C0E4"/>
<dbReference type="Proteomes" id="UP000005640">
    <property type="component" value="Chromosome X"/>
</dbReference>
<dbReference type="RNAct" id="P0C0E4">
    <property type="molecule type" value="protein"/>
</dbReference>
<dbReference type="Bgee" id="ENSG00000102128">
    <property type="expression patterns" value="Expressed in stromal cell of endometrium and 53 other cell types or tissues"/>
</dbReference>
<dbReference type="GO" id="GO:0005737">
    <property type="term" value="C:cytoplasm"/>
    <property type="evidence" value="ECO:0000314"/>
    <property type="project" value="UniProtKB"/>
</dbReference>
<dbReference type="GO" id="GO:0005768">
    <property type="term" value="C:endosome"/>
    <property type="evidence" value="ECO:0000318"/>
    <property type="project" value="GO_Central"/>
</dbReference>
<dbReference type="GO" id="GO:0005739">
    <property type="term" value="C:mitochondrion"/>
    <property type="evidence" value="ECO:0000314"/>
    <property type="project" value="UniProtKB"/>
</dbReference>
<dbReference type="GO" id="GO:0005886">
    <property type="term" value="C:plasma membrane"/>
    <property type="evidence" value="ECO:0000318"/>
    <property type="project" value="GO_Central"/>
</dbReference>
<dbReference type="GO" id="GO:0008021">
    <property type="term" value="C:synaptic vesicle"/>
    <property type="evidence" value="ECO:0000318"/>
    <property type="project" value="GO_Central"/>
</dbReference>
<dbReference type="GO" id="GO:0005525">
    <property type="term" value="F:GTP binding"/>
    <property type="evidence" value="ECO:0007669"/>
    <property type="project" value="UniProtKB-KW"/>
</dbReference>
<dbReference type="GO" id="GO:0003924">
    <property type="term" value="F:GTPase activity"/>
    <property type="evidence" value="ECO:0000318"/>
    <property type="project" value="GO_Central"/>
</dbReference>
<dbReference type="GO" id="GO:0006887">
    <property type="term" value="P:exocytosis"/>
    <property type="evidence" value="ECO:0000318"/>
    <property type="project" value="GO_Central"/>
</dbReference>
<dbReference type="GO" id="GO:0035556">
    <property type="term" value="P:intracellular signal transduction"/>
    <property type="evidence" value="ECO:0007669"/>
    <property type="project" value="InterPro"/>
</dbReference>
<dbReference type="GO" id="GO:0016567">
    <property type="term" value="P:protein ubiquitination"/>
    <property type="evidence" value="ECO:0007669"/>
    <property type="project" value="UniProtKB-UniPathway"/>
</dbReference>
<dbReference type="CDD" id="cd03742">
    <property type="entry name" value="SOCS_Rab40"/>
    <property type="match status" value="1"/>
</dbReference>
<dbReference type="FunFam" id="3.40.50.300:FF:000371">
    <property type="entry name" value="RAB40C, member RAS oncogene family"/>
    <property type="match status" value="1"/>
</dbReference>
<dbReference type="Gene3D" id="3.40.50.300">
    <property type="entry name" value="P-loop containing nucleotide triphosphate hydrolases"/>
    <property type="match status" value="1"/>
</dbReference>
<dbReference type="InterPro" id="IPR027417">
    <property type="entry name" value="P-loop_NTPase"/>
</dbReference>
<dbReference type="InterPro" id="IPR005225">
    <property type="entry name" value="Small_GTP-bd"/>
</dbReference>
<dbReference type="InterPro" id="IPR001806">
    <property type="entry name" value="Small_GTPase"/>
</dbReference>
<dbReference type="InterPro" id="IPR050305">
    <property type="entry name" value="Small_GTPase_Rab"/>
</dbReference>
<dbReference type="InterPro" id="IPR001496">
    <property type="entry name" value="SOCS_box"/>
</dbReference>
<dbReference type="InterPro" id="IPR036036">
    <property type="entry name" value="SOCS_box-like_dom_sf"/>
</dbReference>
<dbReference type="NCBIfam" id="TIGR00231">
    <property type="entry name" value="small_GTP"/>
    <property type="match status" value="1"/>
</dbReference>
<dbReference type="PANTHER" id="PTHR47980">
    <property type="entry name" value="LD44762P"/>
    <property type="match status" value="1"/>
</dbReference>
<dbReference type="Pfam" id="PF00071">
    <property type="entry name" value="Ras"/>
    <property type="match status" value="1"/>
</dbReference>
<dbReference type="Pfam" id="PF07525">
    <property type="entry name" value="SOCS_box"/>
    <property type="match status" value="1"/>
</dbReference>
<dbReference type="PRINTS" id="PR00449">
    <property type="entry name" value="RASTRNSFRMNG"/>
</dbReference>
<dbReference type="SMART" id="SM00175">
    <property type="entry name" value="RAB"/>
    <property type="match status" value="1"/>
</dbReference>
<dbReference type="SMART" id="SM00176">
    <property type="entry name" value="RAN"/>
    <property type="match status" value="1"/>
</dbReference>
<dbReference type="SMART" id="SM00173">
    <property type="entry name" value="RAS"/>
    <property type="match status" value="1"/>
</dbReference>
<dbReference type="SMART" id="SM00174">
    <property type="entry name" value="RHO"/>
    <property type="match status" value="1"/>
</dbReference>
<dbReference type="SMART" id="SM00253">
    <property type="entry name" value="SOCS"/>
    <property type="match status" value="1"/>
</dbReference>
<dbReference type="SMART" id="SM00969">
    <property type="entry name" value="SOCS_box"/>
    <property type="match status" value="1"/>
</dbReference>
<dbReference type="SUPFAM" id="SSF52540">
    <property type="entry name" value="P-loop containing nucleoside triphosphate hydrolases"/>
    <property type="match status" value="1"/>
</dbReference>
<dbReference type="SUPFAM" id="SSF158235">
    <property type="entry name" value="SOCS box-like"/>
    <property type="match status" value="1"/>
</dbReference>
<dbReference type="PROSITE" id="PS51419">
    <property type="entry name" value="RAB"/>
    <property type="match status" value="1"/>
</dbReference>
<dbReference type="PROSITE" id="PS50225">
    <property type="entry name" value="SOCS"/>
    <property type="match status" value="1"/>
</dbReference>
<organism>
    <name type="scientific">Homo sapiens</name>
    <name type="common">Human</name>
    <dbReference type="NCBI Taxonomy" id="9606"/>
    <lineage>
        <taxon>Eukaryota</taxon>
        <taxon>Metazoa</taxon>
        <taxon>Chordata</taxon>
        <taxon>Craniata</taxon>
        <taxon>Vertebrata</taxon>
        <taxon>Euteleostomi</taxon>
        <taxon>Mammalia</taxon>
        <taxon>Eutheria</taxon>
        <taxon>Euarchontoglires</taxon>
        <taxon>Primates</taxon>
        <taxon>Haplorrhini</taxon>
        <taxon>Catarrhini</taxon>
        <taxon>Hominidae</taxon>
        <taxon>Homo</taxon>
    </lineage>
</organism>
<feature type="chain" id="PRO_0000121258" description="Ras-related protein Rab-40A-like">
    <location>
        <begin position="1"/>
        <end position="278"/>
    </location>
</feature>
<feature type="domain" description="SOCS box" evidence="5">
    <location>
        <begin position="175"/>
        <end position="228"/>
    </location>
</feature>
<feature type="region of interest" description="Switch-I" evidence="6">
    <location>
        <begin position="41"/>
        <end position="49"/>
    </location>
</feature>
<feature type="region of interest" description="Switch-II" evidence="6">
    <location>
        <begin position="72"/>
        <end position="88"/>
    </location>
</feature>
<feature type="binding site" evidence="1">
    <location>
        <position position="26"/>
    </location>
    <ligand>
        <name>GTP</name>
        <dbReference type="ChEBI" id="CHEBI:37565"/>
    </ligand>
</feature>
<feature type="binding site" evidence="1">
    <location>
        <position position="27"/>
    </location>
    <ligand>
        <name>GTP</name>
        <dbReference type="ChEBI" id="CHEBI:37565"/>
    </ligand>
</feature>
<feature type="binding site" evidence="1">
    <location>
        <position position="28"/>
    </location>
    <ligand>
        <name>GTP</name>
        <dbReference type="ChEBI" id="CHEBI:37565"/>
    </ligand>
</feature>
<feature type="binding site" evidence="1">
    <location>
        <position position="28"/>
    </location>
    <ligand>
        <name>Mg(2+)</name>
        <dbReference type="ChEBI" id="CHEBI:18420"/>
    </ligand>
</feature>
<feature type="binding site" evidence="1">
    <location>
        <position position="69"/>
    </location>
    <ligand>
        <name>Mg(2+)</name>
        <dbReference type="ChEBI" id="CHEBI:18420"/>
    </ligand>
</feature>
<feature type="binding site" evidence="1">
    <location>
        <position position="72"/>
    </location>
    <ligand>
        <name>GTP</name>
        <dbReference type="ChEBI" id="CHEBI:37565"/>
    </ligand>
</feature>
<feature type="binding site" evidence="1">
    <location>
        <position position="126"/>
    </location>
    <ligand>
        <name>GTP</name>
        <dbReference type="ChEBI" id="CHEBI:37565"/>
    </ligand>
</feature>
<feature type="binding site" evidence="1">
    <location>
        <position position="127"/>
    </location>
    <ligand>
        <name>GTP</name>
        <dbReference type="ChEBI" id="CHEBI:37565"/>
    </ligand>
</feature>
<feature type="lipid moiety-binding region" description="S-palmitoyl cysteine" evidence="4">
    <location>
        <position position="270"/>
    </location>
</feature>
<feature type="lipid moiety-binding region" description="S-geranylgeranyl cysteine" evidence="1">
    <location>
        <position position="275"/>
    </location>
</feature>
<feature type="sequence variant" id="VAR_068916" description="Renders the protein unstable and disrupts its cytoplasmic localization; dbSNP:rs145606134." evidence="8 9 10 11">
    <original>D</original>
    <variation>G</variation>
    <location>
        <position position="59"/>
    </location>
</feature>
<accession>P0C0E4</accession>
<accession>Q495H3</accession>
<gene>
    <name evidence="15" type="primary">RAB40AL</name>
    <name evidence="13" type="synonym">RLGP</name>
</gene>
<proteinExistence type="evidence at protein level"/>
<comment type="function">
    <text evidence="2 3">May act as substrate-recognition component of the ECS(RAB40) E3 ubiquitin ligase complex which mediates the ubiquitination and subsequent proteasomal degradation of target proteins (By similarity). The Rab40 subfamily belongs to the Rab family that are key regulators of intracellular membrane trafficking, from the formation of transport vesicles to their fusion with membranes. Rabs cycle between an inactive GDP-bound form and an active GTP-bound form that is able to recruit to membranes different sets of downstream effectors directly responsible for vesicle formation, movement, tethering and fusion (By similarity).</text>
</comment>
<comment type="catalytic activity">
    <reaction evidence="3">
        <text>GTP + H2O = GDP + phosphate + H(+)</text>
        <dbReference type="Rhea" id="RHEA:19669"/>
        <dbReference type="ChEBI" id="CHEBI:15377"/>
        <dbReference type="ChEBI" id="CHEBI:15378"/>
        <dbReference type="ChEBI" id="CHEBI:37565"/>
        <dbReference type="ChEBI" id="CHEBI:43474"/>
        <dbReference type="ChEBI" id="CHEBI:58189"/>
        <dbReference type="EC" id="3.6.5.2"/>
    </reaction>
    <physiologicalReaction direction="left-to-right" evidence="3">
        <dbReference type="Rhea" id="RHEA:19670"/>
    </physiologicalReaction>
</comment>
<comment type="cofactor">
    <cofactor evidence="1">
        <name>Mg(2+)</name>
        <dbReference type="ChEBI" id="CHEBI:18420"/>
    </cofactor>
</comment>
<comment type="activity regulation">
    <text evidence="1">Regulated by guanine nucleotide exchange factors (GEFs) which promote the exchange of bound GDP for free GTP. Regulated by GTPase activating proteins (GAPs) which increase the GTP hydrolysis activity. Inhibited by GDP dissociation inhibitors (GDIs).</text>
</comment>
<comment type="pathway">
    <text>Protein modification; protein ubiquitination.</text>
</comment>
<comment type="subcellular location">
    <subcellularLocation>
        <location evidence="14">Membrane</location>
        <topology evidence="14">Lipid-anchor</topology>
        <orientation evidence="14">Cytoplasmic side</orientation>
    </subcellularLocation>
    <subcellularLocation>
        <location evidence="8">Cytoplasm</location>
    </subcellularLocation>
    <subcellularLocation>
        <location evidence="7 8">Mitochondrion</location>
    </subcellularLocation>
</comment>
<comment type="tissue specificity">
    <text evidence="7 8">Expressed in brain, lung, heart, skeletal muscle, kidney and liver. Highest expression in brain. Expressed in fetal brain and kidney.</text>
</comment>
<comment type="domain">
    <text evidence="3">The SOCS box contains two defined motifs including the BC box that recruits and binds Elongin BC complex, and the Cul box which interacts with the Cullin family of proteins to form a ECS (Elongin-Cullin-SOCS-box protein) E3 ubiquitin ligase complex.</text>
</comment>
<comment type="domain">
    <text evidence="1">Switch I, switch II and the interswitch regions are characteristic of Rab GTPases and mediate the interactions with Rab downstream effectors. The switch regions undergo conformational changes upon nucleotide binding which drive interaction with specific sets of effector proteins, with most effectors only binding to GTP-bound Rab.</text>
</comment>
<comment type="similarity">
    <text evidence="14">Belongs to the small GTPase superfamily. Rab family.</text>
</comment>
<evidence type="ECO:0000250" key="1">
    <source>
        <dbReference type="UniProtKB" id="P62820"/>
    </source>
</evidence>
<evidence type="ECO:0000250" key="2">
    <source>
        <dbReference type="UniProtKB" id="Q8WXH6"/>
    </source>
</evidence>
<evidence type="ECO:0000250" key="3">
    <source>
        <dbReference type="UniProtKB" id="Q96S21"/>
    </source>
</evidence>
<evidence type="ECO:0000255" key="4"/>
<evidence type="ECO:0000255" key="5">
    <source>
        <dbReference type="PROSITE-ProRule" id="PRU00194"/>
    </source>
</evidence>
<evidence type="ECO:0000255" key="6">
    <source>
        <dbReference type="PROSITE-ProRule" id="PRU00753"/>
    </source>
</evidence>
<evidence type="ECO:0000269" key="7">
    <source>
    </source>
</evidence>
<evidence type="ECO:0000269" key="8">
    <source>
    </source>
</evidence>
<evidence type="ECO:0000269" key="9">
    <source>
    </source>
</evidence>
<evidence type="ECO:0000269" key="10">
    <source>
    </source>
</evidence>
<evidence type="ECO:0000269" key="11">
    <source>
    </source>
</evidence>
<evidence type="ECO:0000303" key="12">
    <source>
    </source>
</evidence>
<evidence type="ECO:0000303" key="13">
    <source>
    </source>
</evidence>
<evidence type="ECO:0000305" key="14"/>
<evidence type="ECO:0000312" key="15">
    <source>
        <dbReference type="HGNC" id="HGNC:25410"/>
    </source>
</evidence>
<keyword id="KW-0963">Cytoplasm</keyword>
<keyword id="KW-0342">GTP-binding</keyword>
<keyword id="KW-0378">Hydrolase</keyword>
<keyword id="KW-0449">Lipoprotein</keyword>
<keyword id="KW-0460">Magnesium</keyword>
<keyword id="KW-0472">Membrane</keyword>
<keyword id="KW-0479">Metal-binding</keyword>
<keyword id="KW-0496">Mitochondrion</keyword>
<keyword id="KW-0547">Nucleotide-binding</keyword>
<keyword id="KW-0564">Palmitate</keyword>
<keyword id="KW-0636">Prenylation</keyword>
<keyword id="KW-1185">Reference proteome</keyword>
<keyword id="KW-0833">Ubl conjugation pathway</keyword>
<name>RB40L_HUMAN</name>
<reference key="1">
    <citation type="journal article" date="2002" name="Am. J. Hum. Genet.">
        <title>The Xq22 inversion breakpoint interrupted a novel Ras-like GTPase gene in a patient with Duchenne muscular dystrophy and profound mental retardation.</title>
        <authorList>
            <person name="Saito-Ohara F."/>
            <person name="Fukuda Y."/>
            <person name="Ito M."/>
            <person name="Agarwala K.L."/>
            <person name="Hayashi M."/>
            <person name="Matsuo M."/>
            <person name="Imoto I."/>
            <person name="Yamakawa K."/>
            <person name="Nakamura Y."/>
            <person name="Inazawa J."/>
        </authorList>
    </citation>
    <scope>NUCLEOTIDE SEQUENCE [GENOMIC DNA]</scope>
    <scope>SUBCELLULAR LOCATION</scope>
    <scope>TISSUE SPECIFICITY</scope>
</reference>
<reference key="2">
    <citation type="journal article" date="2005" name="Nature">
        <title>The DNA sequence of the human X chromosome.</title>
        <authorList>
            <person name="Ross M.T."/>
            <person name="Grafham D.V."/>
            <person name="Coffey A.J."/>
            <person name="Scherer S."/>
            <person name="McLay K."/>
            <person name="Muzny D."/>
            <person name="Platzer M."/>
            <person name="Howell G.R."/>
            <person name="Burrows C."/>
            <person name="Bird C.P."/>
            <person name="Frankish A."/>
            <person name="Lovell F.L."/>
            <person name="Howe K.L."/>
            <person name="Ashurst J.L."/>
            <person name="Fulton R.S."/>
            <person name="Sudbrak R."/>
            <person name="Wen G."/>
            <person name="Jones M.C."/>
            <person name="Hurles M.E."/>
            <person name="Andrews T.D."/>
            <person name="Scott C.E."/>
            <person name="Searle S."/>
            <person name="Ramser J."/>
            <person name="Whittaker A."/>
            <person name="Deadman R."/>
            <person name="Carter N.P."/>
            <person name="Hunt S.E."/>
            <person name="Chen R."/>
            <person name="Cree A."/>
            <person name="Gunaratne P."/>
            <person name="Havlak P."/>
            <person name="Hodgson A."/>
            <person name="Metzker M.L."/>
            <person name="Richards S."/>
            <person name="Scott G."/>
            <person name="Steffen D."/>
            <person name="Sodergren E."/>
            <person name="Wheeler D.A."/>
            <person name="Worley K.C."/>
            <person name="Ainscough R."/>
            <person name="Ambrose K.D."/>
            <person name="Ansari-Lari M.A."/>
            <person name="Aradhya S."/>
            <person name="Ashwell R.I."/>
            <person name="Babbage A.K."/>
            <person name="Bagguley C.L."/>
            <person name="Ballabio A."/>
            <person name="Banerjee R."/>
            <person name="Barker G.E."/>
            <person name="Barlow K.F."/>
            <person name="Barrett I.P."/>
            <person name="Bates K.N."/>
            <person name="Beare D.M."/>
            <person name="Beasley H."/>
            <person name="Beasley O."/>
            <person name="Beck A."/>
            <person name="Bethel G."/>
            <person name="Blechschmidt K."/>
            <person name="Brady N."/>
            <person name="Bray-Allen S."/>
            <person name="Bridgeman A.M."/>
            <person name="Brown A.J."/>
            <person name="Brown M.J."/>
            <person name="Bonnin D."/>
            <person name="Bruford E.A."/>
            <person name="Buhay C."/>
            <person name="Burch P."/>
            <person name="Burford D."/>
            <person name="Burgess J."/>
            <person name="Burrill W."/>
            <person name="Burton J."/>
            <person name="Bye J.M."/>
            <person name="Carder C."/>
            <person name="Carrel L."/>
            <person name="Chako J."/>
            <person name="Chapman J.C."/>
            <person name="Chavez D."/>
            <person name="Chen E."/>
            <person name="Chen G."/>
            <person name="Chen Y."/>
            <person name="Chen Z."/>
            <person name="Chinault C."/>
            <person name="Ciccodicola A."/>
            <person name="Clark S.Y."/>
            <person name="Clarke G."/>
            <person name="Clee C.M."/>
            <person name="Clegg S."/>
            <person name="Clerc-Blankenburg K."/>
            <person name="Clifford K."/>
            <person name="Cobley V."/>
            <person name="Cole C.G."/>
            <person name="Conquer J.S."/>
            <person name="Corby N."/>
            <person name="Connor R.E."/>
            <person name="David R."/>
            <person name="Davies J."/>
            <person name="Davis C."/>
            <person name="Davis J."/>
            <person name="Delgado O."/>
            <person name="Deshazo D."/>
            <person name="Dhami P."/>
            <person name="Ding Y."/>
            <person name="Dinh H."/>
            <person name="Dodsworth S."/>
            <person name="Draper H."/>
            <person name="Dugan-Rocha S."/>
            <person name="Dunham A."/>
            <person name="Dunn M."/>
            <person name="Durbin K.J."/>
            <person name="Dutta I."/>
            <person name="Eades T."/>
            <person name="Ellwood M."/>
            <person name="Emery-Cohen A."/>
            <person name="Errington H."/>
            <person name="Evans K.L."/>
            <person name="Faulkner L."/>
            <person name="Francis F."/>
            <person name="Frankland J."/>
            <person name="Fraser A.E."/>
            <person name="Galgoczy P."/>
            <person name="Gilbert J."/>
            <person name="Gill R."/>
            <person name="Gloeckner G."/>
            <person name="Gregory S.G."/>
            <person name="Gribble S."/>
            <person name="Griffiths C."/>
            <person name="Grocock R."/>
            <person name="Gu Y."/>
            <person name="Gwilliam R."/>
            <person name="Hamilton C."/>
            <person name="Hart E.A."/>
            <person name="Hawes A."/>
            <person name="Heath P.D."/>
            <person name="Heitmann K."/>
            <person name="Hennig S."/>
            <person name="Hernandez J."/>
            <person name="Hinzmann B."/>
            <person name="Ho S."/>
            <person name="Hoffs M."/>
            <person name="Howden P.J."/>
            <person name="Huckle E.J."/>
            <person name="Hume J."/>
            <person name="Hunt P.J."/>
            <person name="Hunt A.R."/>
            <person name="Isherwood J."/>
            <person name="Jacob L."/>
            <person name="Johnson D."/>
            <person name="Jones S."/>
            <person name="de Jong P.J."/>
            <person name="Joseph S.S."/>
            <person name="Keenan S."/>
            <person name="Kelly S."/>
            <person name="Kershaw J.K."/>
            <person name="Khan Z."/>
            <person name="Kioschis P."/>
            <person name="Klages S."/>
            <person name="Knights A.J."/>
            <person name="Kosiura A."/>
            <person name="Kovar-Smith C."/>
            <person name="Laird G.K."/>
            <person name="Langford C."/>
            <person name="Lawlor S."/>
            <person name="Leversha M."/>
            <person name="Lewis L."/>
            <person name="Liu W."/>
            <person name="Lloyd C."/>
            <person name="Lloyd D.M."/>
            <person name="Loulseged H."/>
            <person name="Loveland J.E."/>
            <person name="Lovell J.D."/>
            <person name="Lozado R."/>
            <person name="Lu J."/>
            <person name="Lyne R."/>
            <person name="Ma J."/>
            <person name="Maheshwari M."/>
            <person name="Matthews L.H."/>
            <person name="McDowall J."/>
            <person name="McLaren S."/>
            <person name="McMurray A."/>
            <person name="Meidl P."/>
            <person name="Meitinger T."/>
            <person name="Milne S."/>
            <person name="Miner G."/>
            <person name="Mistry S.L."/>
            <person name="Morgan M."/>
            <person name="Morris S."/>
            <person name="Mueller I."/>
            <person name="Mullikin J.C."/>
            <person name="Nguyen N."/>
            <person name="Nordsiek G."/>
            <person name="Nyakatura G."/>
            <person name="O'dell C.N."/>
            <person name="Okwuonu G."/>
            <person name="Palmer S."/>
            <person name="Pandian R."/>
            <person name="Parker D."/>
            <person name="Parrish J."/>
            <person name="Pasternak S."/>
            <person name="Patel D."/>
            <person name="Pearce A.V."/>
            <person name="Pearson D.M."/>
            <person name="Pelan S.E."/>
            <person name="Perez L."/>
            <person name="Porter K.M."/>
            <person name="Ramsey Y."/>
            <person name="Reichwald K."/>
            <person name="Rhodes S."/>
            <person name="Ridler K.A."/>
            <person name="Schlessinger D."/>
            <person name="Schueler M.G."/>
            <person name="Sehra H.K."/>
            <person name="Shaw-Smith C."/>
            <person name="Shen H."/>
            <person name="Sheridan E.M."/>
            <person name="Shownkeen R."/>
            <person name="Skuce C.D."/>
            <person name="Smith M.L."/>
            <person name="Sotheran E.C."/>
            <person name="Steingruber H.E."/>
            <person name="Steward C.A."/>
            <person name="Storey R."/>
            <person name="Swann R.M."/>
            <person name="Swarbreck D."/>
            <person name="Tabor P.E."/>
            <person name="Taudien S."/>
            <person name="Taylor T."/>
            <person name="Teague B."/>
            <person name="Thomas K."/>
            <person name="Thorpe A."/>
            <person name="Timms K."/>
            <person name="Tracey A."/>
            <person name="Trevanion S."/>
            <person name="Tromans A.C."/>
            <person name="d'Urso M."/>
            <person name="Verduzco D."/>
            <person name="Villasana D."/>
            <person name="Waldron L."/>
            <person name="Wall M."/>
            <person name="Wang Q."/>
            <person name="Warren J."/>
            <person name="Warry G.L."/>
            <person name="Wei X."/>
            <person name="West A."/>
            <person name="Whitehead S.L."/>
            <person name="Whiteley M.N."/>
            <person name="Wilkinson J.E."/>
            <person name="Willey D.L."/>
            <person name="Williams G."/>
            <person name="Williams L."/>
            <person name="Williamson A."/>
            <person name="Williamson H."/>
            <person name="Wilming L."/>
            <person name="Woodmansey R.L."/>
            <person name="Wray P.W."/>
            <person name="Yen J."/>
            <person name="Zhang J."/>
            <person name="Zhou J."/>
            <person name="Zoghbi H."/>
            <person name="Zorilla S."/>
            <person name="Buck D."/>
            <person name="Reinhardt R."/>
            <person name="Poustka A."/>
            <person name="Rosenthal A."/>
            <person name="Lehrach H."/>
            <person name="Meindl A."/>
            <person name="Minx P.J."/>
            <person name="Hillier L.W."/>
            <person name="Willard H.F."/>
            <person name="Wilson R.K."/>
            <person name="Waterston R.H."/>
            <person name="Rice C.M."/>
            <person name="Vaudin M."/>
            <person name="Coulson A."/>
            <person name="Nelson D.L."/>
            <person name="Weinstock G."/>
            <person name="Sulston J.E."/>
            <person name="Durbin R.M."/>
            <person name="Hubbard T."/>
            <person name="Gibbs R.A."/>
            <person name="Beck S."/>
            <person name="Rogers J."/>
            <person name="Bentley D.R."/>
        </authorList>
    </citation>
    <scope>NUCLEOTIDE SEQUENCE [LARGE SCALE GENOMIC DNA]</scope>
</reference>
<reference key="3">
    <citation type="journal article" date="2004" name="Genome Res.">
        <title>The status, quality, and expansion of the NIH full-length cDNA project: the Mammalian Gene Collection (MGC).</title>
        <authorList>
            <consortium name="The MGC Project Team"/>
        </authorList>
    </citation>
    <scope>NUCLEOTIDE SEQUENCE [LARGE SCALE MRNA]</scope>
</reference>
<reference key="4">
    <citation type="journal article" date="2012" name="J. Med. Genet.">
        <title>Disruption of RAB40AL function leads to Martin--Probst syndrome, a rare X-linked multisystem neurodevelopmental human disorder.</title>
        <authorList>
            <person name="Bedoyan J.K."/>
            <person name="Schaibley V.M."/>
            <person name="Peng W."/>
            <person name="Bai Y."/>
            <person name="Mondal K."/>
            <person name="Shetty A.C."/>
            <person name="Durham M."/>
            <person name="Micucci J.A."/>
            <person name="Dhiraaj A."/>
            <person name="Skidmore J.M."/>
            <person name="Kaplan J.B."/>
            <person name="Skinner C."/>
            <person name="Schwartz C.E."/>
            <person name="Antonellis A."/>
            <person name="Zwick M.E."/>
            <person name="Cavalcoli J.D."/>
            <person name="Li J.Z."/>
            <person name="Martin D.M."/>
        </authorList>
    </citation>
    <scope>SUBCELLULAR LOCATION</scope>
    <scope>TISSUE SPECIFICITY</scope>
    <scope>VARIANT GLY-59</scope>
    <scope>CHARACTERIZATION OF VARIANT GLY-59</scope>
</reference>
<reference key="5">
    <citation type="journal article" date="2014" name="Hum. Mutat.">
        <title>Evidence against RAB40AL being the locus for Martin-Probst X-linked deafness-intellectual disability syndrome.</title>
        <authorList>
            <person name="Oldak M."/>
            <person name="Sciezynska A."/>
            <person name="Mlynarski W."/>
            <person name="Borowiec M."/>
            <person name="Ruszkowska E."/>
            <person name="Szulborski K."/>
            <person name="Pollak A."/>
            <person name="Kosinska J."/>
            <person name="Mueller-Malesinska M."/>
            <person name="Stawinski P."/>
            <person name="Szaflik J.P."/>
            <person name="Ploski R."/>
        </authorList>
    </citation>
    <scope>VARIANT GLY-59</scope>
</reference>
<reference key="6">
    <citation type="journal article" date="2015" name="Eur. J. Pediatr.">
        <title>A note of caution on the diagnosis of Martin-Probst syndrome by the detection of the p.D59G mutation in the RAB40AL gene.</title>
        <authorList>
            <person name="Oldak M."/>
            <person name="Ruszkowska E."/>
            <person name="Pollak A."/>
            <person name="Sobczyk-Kopciol A."/>
            <person name="Kowalewski C."/>
            <person name="Piwonska A."/>
            <person name="Drygas W."/>
            <person name="Ploski R."/>
        </authorList>
    </citation>
    <scope>VARIANT GLY-59</scope>
</reference>
<reference key="7">
    <citation type="journal article" date="2015" name="Mol. Med. Report.">
        <title>Two-gene mutation in a single patient: Biochemical and functional analysis for a correct interpretation of exome results.</title>
        <authorList>
            <person name="Bianco A.M."/>
            <person name="Faletra F."/>
            <person name="Vozzi D."/>
            <person name="Girardelli M."/>
            <person name="Knowles A."/>
            <person name="Tommasini A."/>
            <person name="Zauli G."/>
            <person name="Marcuzzi A."/>
        </authorList>
    </citation>
    <scope>VARIANT GLY-59</scope>
</reference>
<sequence length="278" mass="31239">MSAPGSPDQAYDFLLKFLLVGDRDVGKSEILESLQDGTAESPYSHLGGIDYKTTTILLDGQRVKLKLWDTSGQGRFCTIFRSYSRGAQGVILVYDIANRWSFEGMDRWIKKIEEHAPGVPKILVGNRLHLAFKRQVPREQAQAYAERLGVTFFEVSPLCNFNIIESFTELARIVLLRHRLNWLGRPSKVLSLQDLCCRTIVSCTPVHLVDKLPLPIALRSHLKSFSMAKGLNARMMRGLSYSLTTSSTHKRSSLCKVKIVCPPQSPPKNCTRNSCKIS</sequence>